<keyword id="KW-0687">Ribonucleoprotein</keyword>
<keyword id="KW-0689">Ribosomal protein</keyword>
<reference key="1">
    <citation type="submission" date="2008-10" db="EMBL/GenBank/DDBJ databases">
        <title>Genome sequence of Bacillus cereus AH187.</title>
        <authorList>
            <person name="Dodson R.J."/>
            <person name="Durkin A.S."/>
            <person name="Rosovitz M.J."/>
            <person name="Rasko D.A."/>
            <person name="Kolsto A.B."/>
            <person name="Okstad O.A."/>
            <person name="Ravel J."/>
            <person name="Sutton G."/>
        </authorList>
    </citation>
    <scope>NUCLEOTIDE SEQUENCE [LARGE SCALE GENOMIC DNA]</scope>
    <source>
        <strain>AH187</strain>
    </source>
</reference>
<sequence>MKRTYQPNKRKRSKVHGFRSRMSTANGRKVLAARRRKGRKVLSA</sequence>
<accession>B7HZH4</accession>
<name>RL34_BACC7</name>
<feature type="chain" id="PRO_1000122895" description="Large ribosomal subunit protein bL34">
    <location>
        <begin position="1"/>
        <end position="44"/>
    </location>
</feature>
<feature type="region of interest" description="Disordered" evidence="2">
    <location>
        <begin position="1"/>
        <end position="44"/>
    </location>
</feature>
<feature type="compositionally biased region" description="Basic residues" evidence="2">
    <location>
        <begin position="1"/>
        <end position="19"/>
    </location>
</feature>
<feature type="compositionally biased region" description="Basic residues" evidence="2">
    <location>
        <begin position="31"/>
        <end position="44"/>
    </location>
</feature>
<gene>
    <name evidence="1" type="primary">rpmH</name>
    <name type="ordered locus">BCAH187_A5675</name>
</gene>
<comment type="similarity">
    <text evidence="1">Belongs to the bacterial ribosomal protein bL34 family.</text>
</comment>
<organism>
    <name type="scientific">Bacillus cereus (strain AH187)</name>
    <dbReference type="NCBI Taxonomy" id="405534"/>
    <lineage>
        <taxon>Bacteria</taxon>
        <taxon>Bacillati</taxon>
        <taxon>Bacillota</taxon>
        <taxon>Bacilli</taxon>
        <taxon>Bacillales</taxon>
        <taxon>Bacillaceae</taxon>
        <taxon>Bacillus</taxon>
        <taxon>Bacillus cereus group</taxon>
    </lineage>
</organism>
<dbReference type="EMBL" id="CP001177">
    <property type="protein sequence ID" value="ACJ78932.1"/>
    <property type="molecule type" value="Genomic_DNA"/>
</dbReference>
<dbReference type="SMR" id="B7HZH4"/>
<dbReference type="KEGG" id="bcr:BCAH187_A5675"/>
<dbReference type="HOGENOM" id="CLU_129938_2_0_9"/>
<dbReference type="Proteomes" id="UP000002214">
    <property type="component" value="Chromosome"/>
</dbReference>
<dbReference type="GO" id="GO:1990904">
    <property type="term" value="C:ribonucleoprotein complex"/>
    <property type="evidence" value="ECO:0007669"/>
    <property type="project" value="UniProtKB-KW"/>
</dbReference>
<dbReference type="GO" id="GO:0005840">
    <property type="term" value="C:ribosome"/>
    <property type="evidence" value="ECO:0007669"/>
    <property type="project" value="UniProtKB-KW"/>
</dbReference>
<dbReference type="GO" id="GO:0003735">
    <property type="term" value="F:structural constituent of ribosome"/>
    <property type="evidence" value="ECO:0007669"/>
    <property type="project" value="InterPro"/>
</dbReference>
<dbReference type="GO" id="GO:0006412">
    <property type="term" value="P:translation"/>
    <property type="evidence" value="ECO:0007669"/>
    <property type="project" value="UniProtKB-UniRule"/>
</dbReference>
<dbReference type="FunFam" id="1.10.287.3980:FF:000001">
    <property type="entry name" value="Mitochondrial ribosomal protein L34"/>
    <property type="match status" value="1"/>
</dbReference>
<dbReference type="Gene3D" id="1.10.287.3980">
    <property type="match status" value="1"/>
</dbReference>
<dbReference type="HAMAP" id="MF_00391">
    <property type="entry name" value="Ribosomal_bL34"/>
    <property type="match status" value="1"/>
</dbReference>
<dbReference type="InterPro" id="IPR000271">
    <property type="entry name" value="Ribosomal_bL34"/>
</dbReference>
<dbReference type="InterPro" id="IPR020939">
    <property type="entry name" value="Ribosomal_bL34_CS"/>
</dbReference>
<dbReference type="NCBIfam" id="TIGR01030">
    <property type="entry name" value="rpmH_bact"/>
    <property type="match status" value="1"/>
</dbReference>
<dbReference type="PANTHER" id="PTHR14503:SF4">
    <property type="entry name" value="LARGE RIBOSOMAL SUBUNIT PROTEIN BL34M"/>
    <property type="match status" value="1"/>
</dbReference>
<dbReference type="PANTHER" id="PTHR14503">
    <property type="entry name" value="MITOCHONDRIAL RIBOSOMAL PROTEIN 34 FAMILY MEMBER"/>
    <property type="match status" value="1"/>
</dbReference>
<dbReference type="Pfam" id="PF00468">
    <property type="entry name" value="Ribosomal_L34"/>
    <property type="match status" value="1"/>
</dbReference>
<dbReference type="PROSITE" id="PS00784">
    <property type="entry name" value="RIBOSOMAL_L34"/>
    <property type="match status" value="1"/>
</dbReference>
<proteinExistence type="inferred from homology"/>
<protein>
    <recommendedName>
        <fullName evidence="1">Large ribosomal subunit protein bL34</fullName>
    </recommendedName>
    <alternativeName>
        <fullName evidence="3">50S ribosomal protein L34</fullName>
    </alternativeName>
</protein>
<evidence type="ECO:0000255" key="1">
    <source>
        <dbReference type="HAMAP-Rule" id="MF_00391"/>
    </source>
</evidence>
<evidence type="ECO:0000256" key="2">
    <source>
        <dbReference type="SAM" id="MobiDB-lite"/>
    </source>
</evidence>
<evidence type="ECO:0000305" key="3"/>